<dbReference type="EC" id="4.2.1.126" evidence="1"/>
<dbReference type="EMBL" id="CP001056">
    <property type="protein sequence ID" value="ACD24255.1"/>
    <property type="molecule type" value="Genomic_DNA"/>
</dbReference>
<dbReference type="SMR" id="B2TPW8"/>
<dbReference type="KEGG" id="cbk:CLL_A3059"/>
<dbReference type="PATRIC" id="fig|935198.13.peg.3023"/>
<dbReference type="HOGENOM" id="CLU_049049_1_1_9"/>
<dbReference type="UniPathway" id="UPA00342"/>
<dbReference type="Proteomes" id="UP000001195">
    <property type="component" value="Chromosome"/>
</dbReference>
<dbReference type="GO" id="GO:0097367">
    <property type="term" value="F:carbohydrate derivative binding"/>
    <property type="evidence" value="ECO:0007669"/>
    <property type="project" value="InterPro"/>
</dbReference>
<dbReference type="GO" id="GO:0016835">
    <property type="term" value="F:carbon-oxygen lyase activity"/>
    <property type="evidence" value="ECO:0007669"/>
    <property type="project" value="UniProtKB-UniRule"/>
</dbReference>
<dbReference type="GO" id="GO:0016803">
    <property type="term" value="F:ether hydrolase activity"/>
    <property type="evidence" value="ECO:0007669"/>
    <property type="project" value="TreeGrafter"/>
</dbReference>
<dbReference type="GO" id="GO:0046348">
    <property type="term" value="P:amino sugar catabolic process"/>
    <property type="evidence" value="ECO:0007669"/>
    <property type="project" value="InterPro"/>
</dbReference>
<dbReference type="GO" id="GO:0097173">
    <property type="term" value="P:N-acetylmuramic acid catabolic process"/>
    <property type="evidence" value="ECO:0007669"/>
    <property type="project" value="UniProtKB-UniPathway"/>
</dbReference>
<dbReference type="GO" id="GO:0009254">
    <property type="term" value="P:peptidoglycan turnover"/>
    <property type="evidence" value="ECO:0007669"/>
    <property type="project" value="TreeGrafter"/>
</dbReference>
<dbReference type="CDD" id="cd05007">
    <property type="entry name" value="SIS_Etherase"/>
    <property type="match status" value="1"/>
</dbReference>
<dbReference type="FunFam" id="3.40.50.10490:FF:000014">
    <property type="entry name" value="N-acetylmuramic acid 6-phosphate etherase"/>
    <property type="match status" value="1"/>
</dbReference>
<dbReference type="Gene3D" id="1.10.8.1080">
    <property type="match status" value="1"/>
</dbReference>
<dbReference type="Gene3D" id="3.40.50.10490">
    <property type="entry name" value="Glucose-6-phosphate isomerase like protein, domain 1"/>
    <property type="match status" value="1"/>
</dbReference>
<dbReference type="HAMAP" id="MF_00068">
    <property type="entry name" value="MurQ"/>
    <property type="match status" value="1"/>
</dbReference>
<dbReference type="InterPro" id="IPR005488">
    <property type="entry name" value="Etherase_MurQ"/>
</dbReference>
<dbReference type="InterPro" id="IPR005486">
    <property type="entry name" value="Glucokinase_regulatory_CS"/>
</dbReference>
<dbReference type="InterPro" id="IPR040190">
    <property type="entry name" value="MURQ/GCKR"/>
</dbReference>
<dbReference type="InterPro" id="IPR001347">
    <property type="entry name" value="SIS_dom"/>
</dbReference>
<dbReference type="InterPro" id="IPR046348">
    <property type="entry name" value="SIS_dom_sf"/>
</dbReference>
<dbReference type="NCBIfam" id="TIGR00274">
    <property type="entry name" value="N-acetylmuramic acid 6-phosphate etherase"/>
    <property type="match status" value="1"/>
</dbReference>
<dbReference type="NCBIfam" id="NF003915">
    <property type="entry name" value="PRK05441.1"/>
    <property type="match status" value="1"/>
</dbReference>
<dbReference type="NCBIfam" id="NF009222">
    <property type="entry name" value="PRK12570.1"/>
    <property type="match status" value="1"/>
</dbReference>
<dbReference type="PANTHER" id="PTHR10088">
    <property type="entry name" value="GLUCOKINASE REGULATORY PROTEIN"/>
    <property type="match status" value="1"/>
</dbReference>
<dbReference type="PANTHER" id="PTHR10088:SF4">
    <property type="entry name" value="GLUCOKINASE REGULATORY PROTEIN"/>
    <property type="match status" value="1"/>
</dbReference>
<dbReference type="Pfam" id="PF20741">
    <property type="entry name" value="GKRP-like_C"/>
    <property type="match status" value="1"/>
</dbReference>
<dbReference type="Pfam" id="PF22645">
    <property type="entry name" value="GKRP_SIS_N"/>
    <property type="match status" value="1"/>
</dbReference>
<dbReference type="SUPFAM" id="SSF53697">
    <property type="entry name" value="SIS domain"/>
    <property type="match status" value="1"/>
</dbReference>
<dbReference type="PROSITE" id="PS01272">
    <property type="entry name" value="GCKR"/>
    <property type="match status" value="1"/>
</dbReference>
<dbReference type="PROSITE" id="PS51464">
    <property type="entry name" value="SIS"/>
    <property type="match status" value="1"/>
</dbReference>
<comment type="function">
    <text evidence="1">Specifically catalyzes the cleavage of the D-lactyl ether substituent of MurNAc 6-phosphate, producing GlcNAc 6-phosphate and D-lactate.</text>
</comment>
<comment type="catalytic activity">
    <reaction evidence="1">
        <text>N-acetyl-D-muramate 6-phosphate + H2O = N-acetyl-D-glucosamine 6-phosphate + (R)-lactate</text>
        <dbReference type="Rhea" id="RHEA:26410"/>
        <dbReference type="ChEBI" id="CHEBI:15377"/>
        <dbReference type="ChEBI" id="CHEBI:16004"/>
        <dbReference type="ChEBI" id="CHEBI:57513"/>
        <dbReference type="ChEBI" id="CHEBI:58722"/>
        <dbReference type="EC" id="4.2.1.126"/>
    </reaction>
</comment>
<comment type="pathway">
    <text evidence="1">Amino-sugar metabolism; N-acetylmuramate degradation.</text>
</comment>
<comment type="subunit">
    <text evidence="1">Homodimer.</text>
</comment>
<comment type="miscellaneous">
    <text evidence="1">A lyase-type mechanism (elimination/hydration) is suggested for the cleavage of the lactyl ether bond of MurNAc 6-phosphate, with the formation of an alpha,beta-unsaturated aldehyde intermediate with (E)-stereochemistry, followed by the syn addition of water to give product.</text>
</comment>
<comment type="similarity">
    <text evidence="1">Belongs to the GCKR-like family. MurNAc-6-P etherase subfamily.</text>
</comment>
<name>MURQ_CLOBB</name>
<keyword id="KW-0119">Carbohydrate metabolism</keyword>
<keyword id="KW-0456">Lyase</keyword>
<proteinExistence type="inferred from homology"/>
<evidence type="ECO:0000255" key="1">
    <source>
        <dbReference type="HAMAP-Rule" id="MF_00068"/>
    </source>
</evidence>
<feature type="chain" id="PRO_1000202426" description="N-acetylmuramic acid 6-phosphate etherase">
    <location>
        <begin position="1"/>
        <end position="301"/>
    </location>
</feature>
<feature type="domain" description="SIS" evidence="1">
    <location>
        <begin position="57"/>
        <end position="220"/>
    </location>
</feature>
<feature type="active site" description="Proton donor" evidence="1">
    <location>
        <position position="85"/>
    </location>
</feature>
<feature type="active site" evidence="1">
    <location>
        <position position="116"/>
    </location>
</feature>
<sequence length="301" mass="32427">MGSIIDNLETEKRNINSENIDIMSTCEIIKTINSEDKKIAYAIEKVIPEIEKLIDATYEKMLFGGRVIYIGAGTSGRLGVLDASECPPTYGVDASLVQGIIAGGYGALLKAKEGAEDSLTLAKEDLKEIKLNSHDTVIGLAASGRTPYVIGGLDYANEIGALTGAISCVNNAQISQHAKYFIEAIVGAEVITGSTRMKAGTAQKMILNMISTSLMIKKGKVYHNLMVDVQPTNKKLIERSKNIIAECTNSSVEEAEKALIDSGNQVKVAMLMLLTKKDKKSCINILNENDGNISKSIRNIP</sequence>
<reference key="1">
    <citation type="submission" date="2008-04" db="EMBL/GenBank/DDBJ databases">
        <title>Complete sequence of Clostridium botulinum strain Eklund.</title>
        <authorList>
            <person name="Brinkac L.M."/>
            <person name="Brown J.L."/>
            <person name="Bruce D."/>
            <person name="Detter C."/>
            <person name="Munk C."/>
            <person name="Smith L.A."/>
            <person name="Smith T.J."/>
            <person name="Sutton G."/>
            <person name="Brettin T.S."/>
        </authorList>
    </citation>
    <scope>NUCLEOTIDE SEQUENCE [LARGE SCALE GENOMIC DNA]</scope>
    <source>
        <strain>Eklund 17B / Type B</strain>
    </source>
</reference>
<accession>B2TPW8</accession>
<protein>
    <recommendedName>
        <fullName evidence="1">N-acetylmuramic acid 6-phosphate etherase</fullName>
        <shortName evidence="1">MurNAc-6-P etherase</shortName>
        <ecNumber evidence="1">4.2.1.126</ecNumber>
    </recommendedName>
    <alternativeName>
        <fullName evidence="1">N-acetylmuramic acid 6-phosphate hydrolase</fullName>
    </alternativeName>
    <alternativeName>
        <fullName evidence="1">N-acetylmuramic acid 6-phosphate lyase</fullName>
    </alternativeName>
</protein>
<organism>
    <name type="scientific">Clostridium botulinum (strain Eklund 17B / Type B)</name>
    <dbReference type="NCBI Taxonomy" id="935198"/>
    <lineage>
        <taxon>Bacteria</taxon>
        <taxon>Bacillati</taxon>
        <taxon>Bacillota</taxon>
        <taxon>Clostridia</taxon>
        <taxon>Eubacteriales</taxon>
        <taxon>Clostridiaceae</taxon>
        <taxon>Clostridium</taxon>
    </lineage>
</organism>
<gene>
    <name evidence="1" type="primary">murQ</name>
    <name type="ordered locus">CLL_A3059</name>
</gene>